<protein>
    <recommendedName>
        <fullName evidence="2">Chaperone protein DnaJ</fullName>
    </recommendedName>
</protein>
<keyword id="KW-0143">Chaperone</keyword>
<keyword id="KW-0963">Cytoplasm</keyword>
<keyword id="KW-0235">DNA replication</keyword>
<keyword id="KW-0479">Metal-binding</keyword>
<keyword id="KW-1185">Reference proteome</keyword>
<keyword id="KW-0677">Repeat</keyword>
<keyword id="KW-0346">Stress response</keyword>
<keyword id="KW-0862">Zinc</keyword>
<keyword id="KW-0863">Zinc-finger</keyword>
<feature type="initiator methionine" description="Removed" evidence="1">
    <location>
        <position position="1"/>
    </location>
</feature>
<feature type="chain" id="PRO_0000070880" description="Chaperone protein DnaJ">
    <location>
        <begin position="2"/>
        <end position="376"/>
    </location>
</feature>
<feature type="domain" description="J" evidence="2">
    <location>
        <begin position="5"/>
        <end position="70"/>
    </location>
</feature>
<feature type="repeat" description="CXXCXGXG motif">
    <location>
        <begin position="144"/>
        <end position="151"/>
    </location>
</feature>
<feature type="repeat" description="CXXCXGXG motif">
    <location>
        <begin position="161"/>
        <end position="168"/>
    </location>
</feature>
<feature type="repeat" description="CXXCXGXG motif">
    <location>
        <begin position="183"/>
        <end position="190"/>
    </location>
</feature>
<feature type="repeat" description="CXXCXGXG motif">
    <location>
        <begin position="197"/>
        <end position="204"/>
    </location>
</feature>
<feature type="zinc finger region" description="CR-type" evidence="2">
    <location>
        <begin position="131"/>
        <end position="209"/>
    </location>
</feature>
<feature type="binding site" evidence="2">
    <location>
        <position position="144"/>
    </location>
    <ligand>
        <name>Zn(2+)</name>
        <dbReference type="ChEBI" id="CHEBI:29105"/>
        <label>1</label>
    </ligand>
</feature>
<feature type="binding site" evidence="2">
    <location>
        <position position="147"/>
    </location>
    <ligand>
        <name>Zn(2+)</name>
        <dbReference type="ChEBI" id="CHEBI:29105"/>
        <label>1</label>
    </ligand>
</feature>
<feature type="binding site" evidence="2">
    <location>
        <position position="161"/>
    </location>
    <ligand>
        <name>Zn(2+)</name>
        <dbReference type="ChEBI" id="CHEBI:29105"/>
        <label>2</label>
    </ligand>
</feature>
<feature type="binding site" evidence="2">
    <location>
        <position position="164"/>
    </location>
    <ligand>
        <name>Zn(2+)</name>
        <dbReference type="ChEBI" id="CHEBI:29105"/>
        <label>2</label>
    </ligand>
</feature>
<feature type="binding site" evidence="2">
    <location>
        <position position="183"/>
    </location>
    <ligand>
        <name>Zn(2+)</name>
        <dbReference type="ChEBI" id="CHEBI:29105"/>
        <label>2</label>
    </ligand>
</feature>
<feature type="binding site" evidence="2">
    <location>
        <position position="186"/>
    </location>
    <ligand>
        <name>Zn(2+)</name>
        <dbReference type="ChEBI" id="CHEBI:29105"/>
        <label>2</label>
    </ligand>
</feature>
<feature type="binding site" evidence="2">
    <location>
        <position position="197"/>
    </location>
    <ligand>
        <name>Zn(2+)</name>
        <dbReference type="ChEBI" id="CHEBI:29105"/>
        <label>1</label>
    </ligand>
</feature>
<feature type="binding site" evidence="2">
    <location>
        <position position="200"/>
    </location>
    <ligand>
        <name>Zn(2+)</name>
        <dbReference type="ChEBI" id="CHEBI:29105"/>
        <label>1</label>
    </ligand>
</feature>
<feature type="sequence conflict" description="In Ref. 2; AAP15561." evidence="3" ref="2">
    <original>QI</original>
    <variation>PV</variation>
    <location>
        <begin position="330"/>
        <end position="331"/>
    </location>
</feature>
<feature type="sequence conflict" description="In Ref. 2; AAP15561." evidence="3" ref="2">
    <original>D</original>
    <variation>N</variation>
    <location>
        <position position="334"/>
    </location>
</feature>
<feature type="sequence conflict" description="In Ref. 2; AAP15561." evidence="3" ref="2">
    <original>D</original>
    <variation>Q</variation>
    <location>
        <position position="337"/>
    </location>
</feature>
<feature type="sequence conflict" description="In Ref. 2; AAP15561." evidence="3" ref="2">
    <original>H</original>
    <variation>Q</variation>
    <location>
        <position position="342"/>
    </location>
</feature>
<feature type="sequence conflict" description="In Ref. 2; AAP15561." evidence="3" ref="2">
    <original>H</original>
    <variation>Q</variation>
    <location>
        <position position="345"/>
    </location>
</feature>
<feature type="sequence conflict" description="In Ref. 2; AAP15561." evidence="3" ref="2">
    <original>Y</original>
    <variation>F</variation>
    <location>
        <position position="348"/>
    </location>
</feature>
<dbReference type="EMBL" id="AE005674">
    <property type="protein sequence ID" value="AAN41681.2"/>
    <property type="molecule type" value="Genomic_DNA"/>
</dbReference>
<dbReference type="EMBL" id="AE014073">
    <property type="protein sequence ID" value="AAP15561.1"/>
    <property type="molecule type" value="Genomic_DNA"/>
</dbReference>
<dbReference type="RefSeq" id="NP_705974.2">
    <property type="nucleotide sequence ID" value="NC_004337.2"/>
</dbReference>
<dbReference type="RefSeq" id="WP_001118477.1">
    <property type="nucleotide sequence ID" value="NZ_CP123365.1"/>
</dbReference>
<dbReference type="SMR" id="Q7UDU1"/>
<dbReference type="STRING" id="198214.SF0015"/>
<dbReference type="PaxDb" id="198214-SF0015"/>
<dbReference type="GeneID" id="1027267"/>
<dbReference type="KEGG" id="sfl:SF0015"/>
<dbReference type="KEGG" id="sfx:S0015"/>
<dbReference type="PATRIC" id="fig|198214.7.peg.14"/>
<dbReference type="HOGENOM" id="CLU_017633_0_7_6"/>
<dbReference type="Proteomes" id="UP000001006">
    <property type="component" value="Chromosome"/>
</dbReference>
<dbReference type="Proteomes" id="UP000002673">
    <property type="component" value="Chromosome"/>
</dbReference>
<dbReference type="GO" id="GO:0005737">
    <property type="term" value="C:cytoplasm"/>
    <property type="evidence" value="ECO:0007669"/>
    <property type="project" value="UniProtKB-SubCell"/>
</dbReference>
<dbReference type="GO" id="GO:0005524">
    <property type="term" value="F:ATP binding"/>
    <property type="evidence" value="ECO:0007669"/>
    <property type="project" value="InterPro"/>
</dbReference>
<dbReference type="GO" id="GO:0031072">
    <property type="term" value="F:heat shock protein binding"/>
    <property type="evidence" value="ECO:0007669"/>
    <property type="project" value="InterPro"/>
</dbReference>
<dbReference type="GO" id="GO:0051082">
    <property type="term" value="F:unfolded protein binding"/>
    <property type="evidence" value="ECO:0007669"/>
    <property type="project" value="UniProtKB-UniRule"/>
</dbReference>
<dbReference type="GO" id="GO:0008270">
    <property type="term" value="F:zinc ion binding"/>
    <property type="evidence" value="ECO:0007669"/>
    <property type="project" value="UniProtKB-UniRule"/>
</dbReference>
<dbReference type="GO" id="GO:0051085">
    <property type="term" value="P:chaperone cofactor-dependent protein refolding"/>
    <property type="evidence" value="ECO:0007669"/>
    <property type="project" value="TreeGrafter"/>
</dbReference>
<dbReference type="GO" id="GO:0006260">
    <property type="term" value="P:DNA replication"/>
    <property type="evidence" value="ECO:0007669"/>
    <property type="project" value="UniProtKB-KW"/>
</dbReference>
<dbReference type="GO" id="GO:0042026">
    <property type="term" value="P:protein refolding"/>
    <property type="evidence" value="ECO:0007669"/>
    <property type="project" value="TreeGrafter"/>
</dbReference>
<dbReference type="GO" id="GO:0009408">
    <property type="term" value="P:response to heat"/>
    <property type="evidence" value="ECO:0007669"/>
    <property type="project" value="InterPro"/>
</dbReference>
<dbReference type="CDD" id="cd06257">
    <property type="entry name" value="DnaJ"/>
    <property type="match status" value="1"/>
</dbReference>
<dbReference type="CDD" id="cd10747">
    <property type="entry name" value="DnaJ_C"/>
    <property type="match status" value="1"/>
</dbReference>
<dbReference type="CDD" id="cd10719">
    <property type="entry name" value="DnaJ_zf"/>
    <property type="match status" value="1"/>
</dbReference>
<dbReference type="FunFam" id="1.10.287.110:FF:000003">
    <property type="entry name" value="Molecular chaperone DnaJ"/>
    <property type="match status" value="1"/>
</dbReference>
<dbReference type="FunFam" id="2.10.230.10:FF:000002">
    <property type="entry name" value="Molecular chaperone DnaJ"/>
    <property type="match status" value="1"/>
</dbReference>
<dbReference type="FunFam" id="2.60.260.20:FF:000004">
    <property type="entry name" value="Molecular chaperone DnaJ"/>
    <property type="match status" value="1"/>
</dbReference>
<dbReference type="Gene3D" id="1.10.287.110">
    <property type="entry name" value="DnaJ domain"/>
    <property type="match status" value="1"/>
</dbReference>
<dbReference type="Gene3D" id="2.10.230.10">
    <property type="entry name" value="Heat shock protein DnaJ, cysteine-rich domain"/>
    <property type="match status" value="1"/>
</dbReference>
<dbReference type="Gene3D" id="2.60.260.20">
    <property type="entry name" value="Urease metallochaperone UreE, N-terminal domain"/>
    <property type="match status" value="2"/>
</dbReference>
<dbReference type="HAMAP" id="MF_01152">
    <property type="entry name" value="DnaJ"/>
    <property type="match status" value="1"/>
</dbReference>
<dbReference type="InterPro" id="IPR012724">
    <property type="entry name" value="DnaJ"/>
</dbReference>
<dbReference type="InterPro" id="IPR002939">
    <property type="entry name" value="DnaJ_C"/>
</dbReference>
<dbReference type="InterPro" id="IPR001623">
    <property type="entry name" value="DnaJ_domain"/>
</dbReference>
<dbReference type="InterPro" id="IPR018253">
    <property type="entry name" value="DnaJ_domain_CS"/>
</dbReference>
<dbReference type="InterPro" id="IPR008971">
    <property type="entry name" value="HSP40/DnaJ_pept-bd"/>
</dbReference>
<dbReference type="InterPro" id="IPR001305">
    <property type="entry name" value="HSP_DnaJ_Cys-rich_dom"/>
</dbReference>
<dbReference type="InterPro" id="IPR036410">
    <property type="entry name" value="HSP_DnaJ_Cys-rich_dom_sf"/>
</dbReference>
<dbReference type="InterPro" id="IPR036869">
    <property type="entry name" value="J_dom_sf"/>
</dbReference>
<dbReference type="NCBIfam" id="TIGR02349">
    <property type="entry name" value="DnaJ_bact"/>
    <property type="match status" value="1"/>
</dbReference>
<dbReference type="NCBIfam" id="NF008035">
    <property type="entry name" value="PRK10767.1"/>
    <property type="match status" value="1"/>
</dbReference>
<dbReference type="PANTHER" id="PTHR43096:SF48">
    <property type="entry name" value="CHAPERONE PROTEIN DNAJ"/>
    <property type="match status" value="1"/>
</dbReference>
<dbReference type="PANTHER" id="PTHR43096">
    <property type="entry name" value="DNAJ HOMOLOG 1, MITOCHONDRIAL-RELATED"/>
    <property type="match status" value="1"/>
</dbReference>
<dbReference type="Pfam" id="PF00226">
    <property type="entry name" value="DnaJ"/>
    <property type="match status" value="1"/>
</dbReference>
<dbReference type="Pfam" id="PF01556">
    <property type="entry name" value="DnaJ_C"/>
    <property type="match status" value="1"/>
</dbReference>
<dbReference type="Pfam" id="PF00684">
    <property type="entry name" value="DnaJ_CXXCXGXG"/>
    <property type="match status" value="1"/>
</dbReference>
<dbReference type="PRINTS" id="PR00625">
    <property type="entry name" value="JDOMAIN"/>
</dbReference>
<dbReference type="SMART" id="SM00271">
    <property type="entry name" value="DnaJ"/>
    <property type="match status" value="1"/>
</dbReference>
<dbReference type="SUPFAM" id="SSF46565">
    <property type="entry name" value="Chaperone J-domain"/>
    <property type="match status" value="1"/>
</dbReference>
<dbReference type="SUPFAM" id="SSF57938">
    <property type="entry name" value="DnaJ/Hsp40 cysteine-rich domain"/>
    <property type="match status" value="1"/>
</dbReference>
<dbReference type="SUPFAM" id="SSF49493">
    <property type="entry name" value="HSP40/DnaJ peptide-binding domain"/>
    <property type="match status" value="2"/>
</dbReference>
<dbReference type="PROSITE" id="PS00636">
    <property type="entry name" value="DNAJ_1"/>
    <property type="match status" value="1"/>
</dbReference>
<dbReference type="PROSITE" id="PS50076">
    <property type="entry name" value="DNAJ_2"/>
    <property type="match status" value="1"/>
</dbReference>
<dbReference type="PROSITE" id="PS51188">
    <property type="entry name" value="ZF_CR"/>
    <property type="match status" value="1"/>
</dbReference>
<name>DNAJ_SHIFL</name>
<accession>Q7UDU1</accession>
<accession>Q83MH4</accession>
<proteinExistence type="inferred from homology"/>
<reference key="1">
    <citation type="journal article" date="2002" name="Nucleic Acids Res.">
        <title>Genome sequence of Shigella flexneri 2a: insights into pathogenicity through comparison with genomes of Escherichia coli K12 and O157.</title>
        <authorList>
            <person name="Jin Q."/>
            <person name="Yuan Z."/>
            <person name="Xu J."/>
            <person name="Wang Y."/>
            <person name="Shen Y."/>
            <person name="Lu W."/>
            <person name="Wang J."/>
            <person name="Liu H."/>
            <person name="Yang J."/>
            <person name="Yang F."/>
            <person name="Zhang X."/>
            <person name="Zhang J."/>
            <person name="Yang G."/>
            <person name="Wu H."/>
            <person name="Qu D."/>
            <person name="Dong J."/>
            <person name="Sun L."/>
            <person name="Xue Y."/>
            <person name="Zhao A."/>
            <person name="Gao Y."/>
            <person name="Zhu J."/>
            <person name="Kan B."/>
            <person name="Ding K."/>
            <person name="Chen S."/>
            <person name="Cheng H."/>
            <person name="Yao Z."/>
            <person name="He B."/>
            <person name="Chen R."/>
            <person name="Ma D."/>
            <person name="Qiang B."/>
            <person name="Wen Y."/>
            <person name="Hou Y."/>
            <person name="Yu J."/>
        </authorList>
    </citation>
    <scope>NUCLEOTIDE SEQUENCE [LARGE SCALE GENOMIC DNA]</scope>
    <source>
        <strain>301 / Serotype 2a</strain>
    </source>
</reference>
<reference key="2">
    <citation type="journal article" date="2003" name="Infect. Immun.">
        <title>Complete genome sequence and comparative genomics of Shigella flexneri serotype 2a strain 2457T.</title>
        <authorList>
            <person name="Wei J."/>
            <person name="Goldberg M.B."/>
            <person name="Burland V."/>
            <person name="Venkatesan M.M."/>
            <person name="Deng W."/>
            <person name="Fournier G."/>
            <person name="Mayhew G.F."/>
            <person name="Plunkett G. III"/>
            <person name="Rose D.J."/>
            <person name="Darling A."/>
            <person name="Mau B."/>
            <person name="Perna N.T."/>
            <person name="Payne S.M."/>
            <person name="Runyen-Janecky L.J."/>
            <person name="Zhou S."/>
            <person name="Schwartz D.C."/>
            <person name="Blattner F.R."/>
        </authorList>
    </citation>
    <scope>NUCLEOTIDE SEQUENCE [LARGE SCALE GENOMIC DNA]</scope>
    <source>
        <strain>ATCC 700930 / 2457T / Serotype 2a</strain>
    </source>
</reference>
<gene>
    <name evidence="2" type="primary">dnaJ</name>
    <name type="ordered locus">SF0015</name>
    <name type="ordered locus">S0015</name>
</gene>
<evidence type="ECO:0000250" key="1"/>
<evidence type="ECO:0000255" key="2">
    <source>
        <dbReference type="HAMAP-Rule" id="MF_01152"/>
    </source>
</evidence>
<evidence type="ECO:0000305" key="3"/>
<sequence>MAKQDYYEILGVSKTAEEREIRKAYKRLAMKYHPDRNQGDKEAEAKFKEIKEAYEVLTDSQKRAAYDQYGHAAFEQGGMGGGGFGGGADFSDIFGDVFGDIFGGGRGRQRAARGADLRYNMELTLEEAVRGVTKEIRIPTLEECDVCHGSGAKPGTQPQTCPTCHGSGQVQMRQGFFAVQQTCPHCQGRGTLIKDPCNKCHGHGRVERSKTLSVKIPAGVDTGDRIRLAGEGEAGEHGAPAGDLYVQVQVKQHPIFEREGNNLYCEVPINFAMAALGGEIEVPTLDGRVKLKVPGETQTGKLFRMRGKGVKSVRGGAQGDLLCRVVVETQIGLDEKDKQLLHELHESYGGPTGEHNSPRSKSFFDGVKKFFDDLTR</sequence>
<organism>
    <name type="scientific">Shigella flexneri</name>
    <dbReference type="NCBI Taxonomy" id="623"/>
    <lineage>
        <taxon>Bacteria</taxon>
        <taxon>Pseudomonadati</taxon>
        <taxon>Pseudomonadota</taxon>
        <taxon>Gammaproteobacteria</taxon>
        <taxon>Enterobacterales</taxon>
        <taxon>Enterobacteriaceae</taxon>
        <taxon>Shigella</taxon>
    </lineage>
</organism>
<comment type="function">
    <text evidence="2">Participates actively in the response to hyperosmotic and heat shock by preventing the aggregation of stress-denatured proteins and by disaggregating proteins, also in an autonomous, DnaK-independent fashion. Unfolded proteins bind initially to DnaJ; upon interaction with the DnaJ-bound protein, DnaK hydrolyzes its bound ATP, resulting in the formation of a stable complex. GrpE releases ADP from DnaK; ATP binding to DnaK triggers the release of the substrate protein, thus completing the reaction cycle. Several rounds of ATP-dependent interactions between DnaJ, DnaK and GrpE are required for fully efficient folding. Also involved, together with DnaK and GrpE, in the DNA replication of plasmids through activation of initiation proteins.</text>
</comment>
<comment type="cofactor">
    <cofactor evidence="2">
        <name>Zn(2+)</name>
        <dbReference type="ChEBI" id="CHEBI:29105"/>
    </cofactor>
    <text evidence="2">Binds 2 Zn(2+) ions per monomer.</text>
</comment>
<comment type="subunit">
    <text evidence="2">Homodimer.</text>
</comment>
<comment type="subcellular location">
    <subcellularLocation>
        <location evidence="2">Cytoplasm</location>
    </subcellularLocation>
</comment>
<comment type="induction">
    <text evidence="1">By heat shock.</text>
</comment>
<comment type="domain">
    <text evidence="2">The J domain is necessary and sufficient to stimulate DnaK ATPase activity. Zinc center 1 plays an important role in the autonomous, DnaK-independent chaperone activity of DnaJ. Zinc center 2 is essential for interaction with DnaK and for DnaJ activity.</text>
</comment>
<comment type="similarity">
    <text evidence="2">Belongs to the DnaJ family.</text>
</comment>